<name>RL36_AYWBP</name>
<reference key="1">
    <citation type="journal article" date="2006" name="J. Bacteriol.">
        <title>Living with genome instability: the adaptation of phytoplasmas to diverse environments of their insect and plant hosts.</title>
        <authorList>
            <person name="Bai X."/>
            <person name="Zhang J."/>
            <person name="Ewing A."/>
            <person name="Miller S.A."/>
            <person name="Jancso Radek A."/>
            <person name="Shevchenko D.V."/>
            <person name="Tsukerman K."/>
            <person name="Walunas T."/>
            <person name="Lapidus A."/>
            <person name="Campbell J.W."/>
            <person name="Hogenhout S.A."/>
        </authorList>
    </citation>
    <scope>NUCLEOTIDE SEQUENCE [LARGE SCALE GENOMIC DNA]</scope>
    <source>
        <strain>AYWB</strain>
    </source>
</reference>
<comment type="similarity">
    <text evidence="1">Belongs to the bacterial ribosomal protein bL36 family.</text>
</comment>
<evidence type="ECO:0000255" key="1">
    <source>
        <dbReference type="HAMAP-Rule" id="MF_00251"/>
    </source>
</evidence>
<evidence type="ECO:0000305" key="2"/>
<dbReference type="EMBL" id="CP000061">
    <property type="protein sequence ID" value="ABC65615.1"/>
    <property type="molecule type" value="Genomic_DNA"/>
</dbReference>
<dbReference type="RefSeq" id="WP_011160599.1">
    <property type="nucleotide sequence ID" value="NC_007716.1"/>
</dbReference>
<dbReference type="SMR" id="Q2NIX8"/>
<dbReference type="STRING" id="322098.AYWB_498"/>
<dbReference type="KEGG" id="ayw:AYWB_498"/>
<dbReference type="eggNOG" id="COG0257">
    <property type="taxonomic scope" value="Bacteria"/>
</dbReference>
<dbReference type="HOGENOM" id="CLU_135723_3_3_14"/>
<dbReference type="OrthoDB" id="9801558at2"/>
<dbReference type="PhylomeDB" id="Q2NIX8"/>
<dbReference type="Proteomes" id="UP000001934">
    <property type="component" value="Chromosome"/>
</dbReference>
<dbReference type="GO" id="GO:1990904">
    <property type="term" value="C:ribonucleoprotein complex"/>
    <property type="evidence" value="ECO:0007669"/>
    <property type="project" value="UniProtKB-KW"/>
</dbReference>
<dbReference type="GO" id="GO:0005840">
    <property type="term" value="C:ribosome"/>
    <property type="evidence" value="ECO:0007669"/>
    <property type="project" value="UniProtKB-KW"/>
</dbReference>
<dbReference type="GO" id="GO:0003735">
    <property type="term" value="F:structural constituent of ribosome"/>
    <property type="evidence" value="ECO:0007669"/>
    <property type="project" value="InterPro"/>
</dbReference>
<dbReference type="GO" id="GO:0006412">
    <property type="term" value="P:translation"/>
    <property type="evidence" value="ECO:0007669"/>
    <property type="project" value="UniProtKB-UniRule"/>
</dbReference>
<dbReference type="HAMAP" id="MF_00251">
    <property type="entry name" value="Ribosomal_bL36"/>
    <property type="match status" value="1"/>
</dbReference>
<dbReference type="InterPro" id="IPR000473">
    <property type="entry name" value="Ribosomal_bL36"/>
</dbReference>
<dbReference type="InterPro" id="IPR035977">
    <property type="entry name" value="Ribosomal_bL36_sp"/>
</dbReference>
<dbReference type="InterPro" id="IPR052010">
    <property type="entry name" value="Ribosomal_LSU_bL36"/>
</dbReference>
<dbReference type="NCBIfam" id="TIGR01022">
    <property type="entry name" value="rpmJ_bact"/>
    <property type="match status" value="1"/>
</dbReference>
<dbReference type="PANTHER" id="PTHR18804">
    <property type="entry name" value="RIBOSOMAL PROTEIN"/>
    <property type="match status" value="1"/>
</dbReference>
<dbReference type="PANTHER" id="PTHR18804:SF16">
    <property type="entry name" value="RIBOSOMAL PROTEIN"/>
    <property type="match status" value="1"/>
</dbReference>
<dbReference type="Pfam" id="PF00444">
    <property type="entry name" value="Ribosomal_L36"/>
    <property type="match status" value="1"/>
</dbReference>
<dbReference type="SUPFAM" id="SSF57840">
    <property type="entry name" value="Ribosomal protein L36"/>
    <property type="match status" value="1"/>
</dbReference>
<dbReference type="PROSITE" id="PS00828">
    <property type="entry name" value="RIBOSOMAL_L36"/>
    <property type="match status" value="1"/>
</dbReference>
<feature type="chain" id="PRO_0000302153" description="Large ribosomal subunit protein bL36">
    <location>
        <begin position="1"/>
        <end position="38"/>
    </location>
</feature>
<organism>
    <name type="scientific">Aster yellows witches'-broom phytoplasma (strain AYWB)</name>
    <dbReference type="NCBI Taxonomy" id="322098"/>
    <lineage>
        <taxon>Bacteria</taxon>
        <taxon>Bacillati</taxon>
        <taxon>Mycoplasmatota</taxon>
        <taxon>Mollicutes</taxon>
        <taxon>Acholeplasmatales</taxon>
        <taxon>Acholeplasmataceae</taxon>
        <taxon>Candidatus Phytoplasma</taxon>
        <taxon>16SrI (Aster yellows group)</taxon>
    </lineage>
</organism>
<keyword id="KW-0687">Ribonucleoprotein</keyword>
<keyword id="KW-0689">Ribosomal protein</keyword>
<accession>Q2NIX8</accession>
<proteinExistence type="inferred from homology"/>
<gene>
    <name evidence="1" type="primary">rpmJ</name>
    <name type="ordered locus">AYWB_498</name>
</gene>
<sequence length="38" mass="4634">MKVRASVKKRSEDDIIVRRKGRIYVINKKNRRHNQRQG</sequence>
<protein>
    <recommendedName>
        <fullName evidence="1">Large ribosomal subunit protein bL36</fullName>
    </recommendedName>
    <alternativeName>
        <fullName evidence="2">50S ribosomal protein L36</fullName>
    </alternativeName>
</protein>